<name>RLME_SHEB5</name>
<reference key="1">
    <citation type="submission" date="2007-02" db="EMBL/GenBank/DDBJ databases">
        <title>Complete sequence of chromosome of Shewanella baltica OS155.</title>
        <authorList>
            <consortium name="US DOE Joint Genome Institute"/>
            <person name="Copeland A."/>
            <person name="Lucas S."/>
            <person name="Lapidus A."/>
            <person name="Barry K."/>
            <person name="Detter J.C."/>
            <person name="Glavina del Rio T."/>
            <person name="Hammon N."/>
            <person name="Israni S."/>
            <person name="Dalin E."/>
            <person name="Tice H."/>
            <person name="Pitluck S."/>
            <person name="Sims D.R."/>
            <person name="Brettin T."/>
            <person name="Bruce D."/>
            <person name="Han C."/>
            <person name="Tapia R."/>
            <person name="Brainard J."/>
            <person name="Schmutz J."/>
            <person name="Larimer F."/>
            <person name="Land M."/>
            <person name="Hauser L."/>
            <person name="Kyrpides N."/>
            <person name="Mikhailova N."/>
            <person name="Brettar I."/>
            <person name="Klappenbach J."/>
            <person name="Konstantinidis K."/>
            <person name="Rodrigues J."/>
            <person name="Tiedje J."/>
            <person name="Richardson P."/>
        </authorList>
    </citation>
    <scope>NUCLEOTIDE SEQUENCE [LARGE SCALE GENOMIC DNA]</scope>
    <source>
        <strain>OS155 / ATCC BAA-1091</strain>
    </source>
</reference>
<feature type="chain" id="PRO_1000087712" description="Ribosomal RNA large subunit methyltransferase E">
    <location>
        <begin position="1"/>
        <end position="209"/>
    </location>
</feature>
<feature type="active site" description="Proton acceptor" evidence="1">
    <location>
        <position position="164"/>
    </location>
</feature>
<feature type="binding site" evidence="1">
    <location>
        <position position="63"/>
    </location>
    <ligand>
        <name>S-adenosyl-L-methionine</name>
        <dbReference type="ChEBI" id="CHEBI:59789"/>
    </ligand>
</feature>
<feature type="binding site" evidence="1">
    <location>
        <position position="65"/>
    </location>
    <ligand>
        <name>S-adenosyl-L-methionine</name>
        <dbReference type="ChEBI" id="CHEBI:59789"/>
    </ligand>
</feature>
<feature type="binding site" evidence="1">
    <location>
        <position position="83"/>
    </location>
    <ligand>
        <name>S-adenosyl-L-methionine</name>
        <dbReference type="ChEBI" id="CHEBI:59789"/>
    </ligand>
</feature>
<feature type="binding site" evidence="1">
    <location>
        <position position="99"/>
    </location>
    <ligand>
        <name>S-adenosyl-L-methionine</name>
        <dbReference type="ChEBI" id="CHEBI:59789"/>
    </ligand>
</feature>
<feature type="binding site" evidence="1">
    <location>
        <position position="124"/>
    </location>
    <ligand>
        <name>S-adenosyl-L-methionine</name>
        <dbReference type="ChEBI" id="CHEBI:59789"/>
    </ligand>
</feature>
<organism>
    <name type="scientific">Shewanella baltica (strain OS155 / ATCC BAA-1091)</name>
    <dbReference type="NCBI Taxonomy" id="325240"/>
    <lineage>
        <taxon>Bacteria</taxon>
        <taxon>Pseudomonadati</taxon>
        <taxon>Pseudomonadota</taxon>
        <taxon>Gammaproteobacteria</taxon>
        <taxon>Alteromonadales</taxon>
        <taxon>Shewanellaceae</taxon>
        <taxon>Shewanella</taxon>
    </lineage>
</organism>
<comment type="function">
    <text evidence="1">Specifically methylates the uridine in position 2552 of 23S rRNA at the 2'-O position of the ribose in the fully assembled 50S ribosomal subunit.</text>
</comment>
<comment type="catalytic activity">
    <reaction evidence="1">
        <text>uridine(2552) in 23S rRNA + S-adenosyl-L-methionine = 2'-O-methyluridine(2552) in 23S rRNA + S-adenosyl-L-homocysteine + H(+)</text>
        <dbReference type="Rhea" id="RHEA:42720"/>
        <dbReference type="Rhea" id="RHEA-COMP:10202"/>
        <dbReference type="Rhea" id="RHEA-COMP:10203"/>
        <dbReference type="ChEBI" id="CHEBI:15378"/>
        <dbReference type="ChEBI" id="CHEBI:57856"/>
        <dbReference type="ChEBI" id="CHEBI:59789"/>
        <dbReference type="ChEBI" id="CHEBI:65315"/>
        <dbReference type="ChEBI" id="CHEBI:74478"/>
        <dbReference type="EC" id="2.1.1.166"/>
    </reaction>
</comment>
<comment type="subcellular location">
    <subcellularLocation>
        <location evidence="1">Cytoplasm</location>
    </subcellularLocation>
</comment>
<comment type="similarity">
    <text evidence="1">Belongs to the class I-like SAM-binding methyltransferase superfamily. RNA methyltransferase RlmE family.</text>
</comment>
<sequence length="209" mass="23096">MSGIKRTASSNRWMLEHFDDHYVKLAQKMGLRSRAAFKLEEIQQKDQLIRPGMTVVDLGAAPGGWSQVAVKLAGDRGKVIACDILPMDPIVGVDFLQGDFREDKVLQALLTRVGDAKVDVVLSDMAPNMSGSDSVDQPRAMYLVELALDMCHQVLAPNGCFAVKVFQGEGFDEYMKAVKAVFKVVKTRKPDSSRARSREVYLVATGYKL</sequence>
<evidence type="ECO:0000255" key="1">
    <source>
        <dbReference type="HAMAP-Rule" id="MF_01547"/>
    </source>
</evidence>
<protein>
    <recommendedName>
        <fullName evidence="1">Ribosomal RNA large subunit methyltransferase E</fullName>
        <ecNumber evidence="1">2.1.1.166</ecNumber>
    </recommendedName>
    <alternativeName>
        <fullName evidence="1">23S rRNA Um2552 methyltransferase</fullName>
    </alternativeName>
    <alternativeName>
        <fullName evidence="1">rRNA (uridine-2'-O-)-methyltransferase</fullName>
    </alternativeName>
</protein>
<gene>
    <name evidence="1" type="primary">rlmE</name>
    <name evidence="1" type="synonym">ftsJ</name>
    <name evidence="1" type="synonym">rrmJ</name>
    <name type="ordered locus">Sbal_3247</name>
</gene>
<proteinExistence type="inferred from homology"/>
<dbReference type="EC" id="2.1.1.166" evidence="1"/>
<dbReference type="EMBL" id="CP000563">
    <property type="protein sequence ID" value="ABN62727.1"/>
    <property type="molecule type" value="Genomic_DNA"/>
</dbReference>
<dbReference type="RefSeq" id="WP_006082724.1">
    <property type="nucleotide sequence ID" value="NC_009052.1"/>
</dbReference>
<dbReference type="SMR" id="A3D7L4"/>
<dbReference type="STRING" id="325240.Sbal_3247"/>
<dbReference type="GeneID" id="11773467"/>
<dbReference type="KEGG" id="sbl:Sbal_3247"/>
<dbReference type="HOGENOM" id="CLU_009422_4_0_6"/>
<dbReference type="OrthoDB" id="9790080at2"/>
<dbReference type="Proteomes" id="UP000001557">
    <property type="component" value="Chromosome"/>
</dbReference>
<dbReference type="GO" id="GO:0005737">
    <property type="term" value="C:cytoplasm"/>
    <property type="evidence" value="ECO:0007669"/>
    <property type="project" value="UniProtKB-SubCell"/>
</dbReference>
<dbReference type="GO" id="GO:0008650">
    <property type="term" value="F:rRNA (uridine-2'-O-)-methyltransferase activity"/>
    <property type="evidence" value="ECO:0007669"/>
    <property type="project" value="UniProtKB-UniRule"/>
</dbReference>
<dbReference type="FunFam" id="3.40.50.150:FF:000005">
    <property type="entry name" value="Ribosomal RNA large subunit methyltransferase E"/>
    <property type="match status" value="1"/>
</dbReference>
<dbReference type="Gene3D" id="3.40.50.150">
    <property type="entry name" value="Vaccinia Virus protein VP39"/>
    <property type="match status" value="1"/>
</dbReference>
<dbReference type="HAMAP" id="MF_01547">
    <property type="entry name" value="RNA_methyltr_E"/>
    <property type="match status" value="1"/>
</dbReference>
<dbReference type="InterPro" id="IPR050082">
    <property type="entry name" value="RNA_methyltr_RlmE"/>
</dbReference>
<dbReference type="InterPro" id="IPR002877">
    <property type="entry name" value="RNA_MeTrfase_FtsJ_dom"/>
</dbReference>
<dbReference type="InterPro" id="IPR015507">
    <property type="entry name" value="rRNA-MeTfrase_E"/>
</dbReference>
<dbReference type="InterPro" id="IPR029063">
    <property type="entry name" value="SAM-dependent_MTases_sf"/>
</dbReference>
<dbReference type="NCBIfam" id="NF008390">
    <property type="entry name" value="PRK11188.1"/>
    <property type="match status" value="1"/>
</dbReference>
<dbReference type="PANTHER" id="PTHR10920">
    <property type="entry name" value="RIBOSOMAL RNA METHYLTRANSFERASE"/>
    <property type="match status" value="1"/>
</dbReference>
<dbReference type="PANTHER" id="PTHR10920:SF18">
    <property type="entry name" value="RRNA METHYLTRANSFERASE 2, MITOCHONDRIAL"/>
    <property type="match status" value="1"/>
</dbReference>
<dbReference type="Pfam" id="PF01728">
    <property type="entry name" value="FtsJ"/>
    <property type="match status" value="1"/>
</dbReference>
<dbReference type="PIRSF" id="PIRSF005461">
    <property type="entry name" value="23S_rRNA_mtase"/>
    <property type="match status" value="1"/>
</dbReference>
<dbReference type="SUPFAM" id="SSF53335">
    <property type="entry name" value="S-adenosyl-L-methionine-dependent methyltransferases"/>
    <property type="match status" value="1"/>
</dbReference>
<keyword id="KW-0963">Cytoplasm</keyword>
<keyword id="KW-0489">Methyltransferase</keyword>
<keyword id="KW-1185">Reference proteome</keyword>
<keyword id="KW-0698">rRNA processing</keyword>
<keyword id="KW-0949">S-adenosyl-L-methionine</keyword>
<keyword id="KW-0808">Transferase</keyword>
<accession>A3D7L4</accession>